<comment type="function">
    <text evidence="1">Mediates the nuclear export of encapsidated genomic RNAs (ribonucleoproteins, RNPs). Acts as an adapter between viral RNPs complexes and the nuclear export machinery of the cell. Possesses no intrinsic RNA-binding activity, but includes a C-terminal M1-binding domain. This domain is believed to allow recognition of RNPs bound to the protein M1. Since protein M1 is not available in large quantities before late stages of infection, such an indirect recognition mechanism probably ensures that genomic RNPs are not exported from the host nucleus until sufficient quantities of viral mRNA and progeny genomic RNA have been synthesized. Furthermore, the RNPs enter the host cytoplasm only when associated with the M1 protein that is necessary to guide them to the plasma membrane. May down-regulate viral RNA synthesis when overproduced.</text>
</comment>
<comment type="subunit">
    <text evidence="1">Interacts with protein M1. May interact with host nucleoporin RAB/HRB and exportin XPO1/CRM1.</text>
</comment>
<comment type="subcellular location">
    <subcellularLocation>
        <location evidence="1">Virion</location>
    </subcellularLocation>
    <subcellularLocation>
        <location evidence="1">Host nucleus</location>
    </subcellularLocation>
</comment>
<comment type="alternative products">
    <event type="alternative splicing"/>
    <isoform>
        <id>A4U7B1-1</id>
        <name>NEP</name>
        <name>NS2</name>
        <sequence type="displayed"/>
    </isoform>
    <isoform>
        <id>A4U7B2-1</id>
        <name>NS1</name>
        <sequence type="external"/>
    </isoform>
</comment>
<comment type="miscellaneous">
    <text>Average number present in a viral particle is estimated to be 130-200 molecules.</text>
</comment>
<comment type="similarity">
    <text evidence="1">Belongs to the influenza viruses NEP family.</text>
</comment>
<keyword id="KW-0025">Alternative splicing</keyword>
<keyword id="KW-1048">Host nucleus</keyword>
<keyword id="KW-0945">Host-virus interaction</keyword>
<keyword id="KW-0813">Transport</keyword>
<keyword id="KW-0946">Virion</keyword>
<feature type="chain" id="PRO_0000372953" description="Nuclear export protein">
    <location>
        <begin position="1"/>
        <end position="121"/>
    </location>
</feature>
<feature type="short sequence motif" description="Nuclear export signal" evidence="1">
    <location>
        <begin position="12"/>
        <end position="21"/>
    </location>
</feature>
<feature type="short sequence motif" description="Nuclear export signal" evidence="1">
    <location>
        <begin position="85"/>
        <end position="94"/>
    </location>
</feature>
<protein>
    <recommendedName>
        <fullName evidence="1">Nuclear export protein</fullName>
        <shortName evidence="1">NEP</shortName>
    </recommendedName>
    <alternativeName>
        <fullName evidence="1">Non-structural protein 2</fullName>
        <shortName evidence="1">NS2</shortName>
    </alternativeName>
</protein>
<evidence type="ECO:0000255" key="1">
    <source>
        <dbReference type="HAMAP-Rule" id="MF_04067"/>
    </source>
</evidence>
<gene>
    <name evidence="1" type="primary">NS</name>
</gene>
<organism>
    <name type="scientific">Influenza A virus (strain A/USA:Albany/12/1951 H1N1)</name>
    <dbReference type="NCBI Taxonomy" id="425580"/>
    <lineage>
        <taxon>Viruses</taxon>
        <taxon>Riboviria</taxon>
        <taxon>Orthornavirae</taxon>
        <taxon>Negarnaviricota</taxon>
        <taxon>Polyploviricotina</taxon>
        <taxon>Insthoviricetes</taxon>
        <taxon>Articulavirales</taxon>
        <taxon>Orthomyxoviridae</taxon>
        <taxon>Alphainfluenzavirus</taxon>
        <taxon>Alphainfluenzavirus influenzae</taxon>
        <taxon>Influenza A virus</taxon>
    </lineage>
</organism>
<organismHost>
    <name type="scientific">Aves</name>
    <dbReference type="NCBI Taxonomy" id="8782"/>
</organismHost>
<organismHost>
    <name type="scientific">Homo sapiens</name>
    <name type="common">Human</name>
    <dbReference type="NCBI Taxonomy" id="9606"/>
</organismHost>
<organismHost>
    <name type="scientific">Sus scrofa</name>
    <name type="common">Pig</name>
    <dbReference type="NCBI Taxonomy" id="9823"/>
</organismHost>
<name>NEP_I51A0</name>
<accession>A4U7B1</accession>
<dbReference type="EMBL" id="CY021825">
    <property type="protein sequence ID" value="ABP49487.1"/>
    <property type="molecule type" value="Viral_cRNA"/>
</dbReference>
<dbReference type="SMR" id="A4U7B1"/>
<dbReference type="Proteomes" id="UP000007556">
    <property type="component" value="Genome"/>
</dbReference>
<dbReference type="GO" id="GO:0042025">
    <property type="term" value="C:host cell nucleus"/>
    <property type="evidence" value="ECO:0007669"/>
    <property type="project" value="UniProtKB-SubCell"/>
</dbReference>
<dbReference type="GO" id="GO:0044423">
    <property type="term" value="C:virion component"/>
    <property type="evidence" value="ECO:0007669"/>
    <property type="project" value="UniProtKB-UniRule"/>
</dbReference>
<dbReference type="GO" id="GO:0039675">
    <property type="term" value="P:exit of virus from host cell nucleus through nuclear pore"/>
    <property type="evidence" value="ECO:0007669"/>
    <property type="project" value="UniProtKB-UniRule"/>
</dbReference>
<dbReference type="Gene3D" id="1.10.287.230">
    <property type="match status" value="1"/>
</dbReference>
<dbReference type="Gene3D" id="1.10.287.10">
    <property type="entry name" value="S15/NS1, RNA-binding"/>
    <property type="match status" value="1"/>
</dbReference>
<dbReference type="HAMAP" id="MF_04067">
    <property type="entry name" value="INFV_NEP"/>
    <property type="match status" value="1"/>
</dbReference>
<dbReference type="InterPro" id="IPR000968">
    <property type="entry name" value="Flu_NS2"/>
</dbReference>
<dbReference type="Pfam" id="PF00601">
    <property type="entry name" value="Flu_NS2"/>
    <property type="match status" value="1"/>
</dbReference>
<dbReference type="SUPFAM" id="SSF101156">
    <property type="entry name" value="Nonstructural protein ns2, Nep, M1-binding domain"/>
    <property type="match status" value="1"/>
</dbReference>
<sequence length="121" mass="14351">MDPNTVSSFQDILMRMSKMQLGSSSEDLNGMITQFESLKLYRDSLGEAVMRMGDLHSLQNRNGKWREQLGQKFEEIRWLIEEVRHKLKITENSFEQITFMQALQLLFEVEQEIRTFSFQLI</sequence>
<proteinExistence type="inferred from homology"/>
<reference key="1">
    <citation type="submission" date="2007-04" db="EMBL/GenBank/DDBJ databases">
        <title>The NIAID influenza genome sequencing project.</title>
        <authorList>
            <person name="Spiro D."/>
            <person name="Sengamalay N."/>
            <person name="Boyne A."/>
            <person name="Bera J."/>
            <person name="Ghedin E."/>
            <person name="Zaborsky J."/>
            <person name="Subbu V."/>
            <person name="Sparenborg J."/>
            <person name="Gallagher T."/>
            <person name="Overton L."/>
            <person name="Althoff R."/>
            <person name="Liu X."/>
            <person name="Sitz J."/>
            <person name="Katzel D."/>
            <person name="Neupane R."/>
            <person name="Shumway M."/>
            <person name="Koo H."/>
            <person name="Griesemer S."/>
            <person name="StGeorge K."/>
            <person name="Bennett R."/>
            <person name="Taylor J."/>
            <person name="Bao Y."/>
            <person name="Bolotov P."/>
            <person name="Dernovoy D."/>
            <person name="Kiryutin B."/>
            <person name="Lipman D.J."/>
            <person name="Tatusova T."/>
        </authorList>
    </citation>
    <scope>NUCLEOTIDE SEQUENCE [GENOMIC RNA]</scope>
</reference>
<reference key="2">
    <citation type="submission" date="2007-04" db="EMBL/GenBank/DDBJ databases">
        <authorList>
            <consortium name="The NIAID Influenza Genome Sequencing Consortium"/>
        </authorList>
    </citation>
    <scope>NUCLEOTIDE SEQUENCE [GENOMIC RNA]</scope>
</reference>